<organism>
    <name type="scientific">Escherichia coli (strain 55989 / EAEC)</name>
    <dbReference type="NCBI Taxonomy" id="585055"/>
    <lineage>
        <taxon>Bacteria</taxon>
        <taxon>Pseudomonadati</taxon>
        <taxon>Pseudomonadota</taxon>
        <taxon>Gammaproteobacteria</taxon>
        <taxon>Enterobacterales</taxon>
        <taxon>Enterobacteriaceae</taxon>
        <taxon>Escherichia</taxon>
    </lineage>
</organism>
<keyword id="KW-0067">ATP-binding</keyword>
<keyword id="KW-0119">Carbohydrate metabolism</keyword>
<keyword id="KW-0418">Kinase</keyword>
<keyword id="KW-0479">Metal-binding</keyword>
<keyword id="KW-0547">Nucleotide-binding</keyword>
<keyword id="KW-1185">Reference proteome</keyword>
<keyword id="KW-0808">Transferase</keyword>
<keyword id="KW-0862">Zinc</keyword>
<feature type="chain" id="PRO_1000164989" description="N-acetylmannosamine kinase">
    <location>
        <begin position="1"/>
        <end position="291"/>
    </location>
</feature>
<feature type="binding site" evidence="1">
    <location>
        <begin position="5"/>
        <end position="12"/>
    </location>
    <ligand>
        <name>ATP</name>
        <dbReference type="ChEBI" id="CHEBI:30616"/>
    </ligand>
</feature>
<feature type="binding site" evidence="1">
    <location>
        <begin position="132"/>
        <end position="139"/>
    </location>
    <ligand>
        <name>ATP</name>
        <dbReference type="ChEBI" id="CHEBI:30616"/>
    </ligand>
</feature>
<feature type="binding site" evidence="1">
    <location>
        <position position="156"/>
    </location>
    <ligand>
        <name>Zn(2+)</name>
        <dbReference type="ChEBI" id="CHEBI:29105"/>
    </ligand>
</feature>
<feature type="binding site" evidence="1">
    <location>
        <position position="166"/>
    </location>
    <ligand>
        <name>Zn(2+)</name>
        <dbReference type="ChEBI" id="CHEBI:29105"/>
    </ligand>
</feature>
<feature type="binding site" evidence="1">
    <location>
        <position position="168"/>
    </location>
    <ligand>
        <name>Zn(2+)</name>
        <dbReference type="ChEBI" id="CHEBI:29105"/>
    </ligand>
</feature>
<feature type="binding site" evidence="1">
    <location>
        <position position="173"/>
    </location>
    <ligand>
        <name>Zn(2+)</name>
        <dbReference type="ChEBI" id="CHEBI:29105"/>
    </ligand>
</feature>
<comment type="function">
    <text evidence="1">Catalyzes the phosphorylation of N-acetylmannosamine (ManNAc) to ManNAc-6-P.</text>
</comment>
<comment type="catalytic activity">
    <reaction evidence="1">
        <text>an N-acyl-D-mannosamine + ATP = an N-acyl-D-mannosamine 6-phosphate + ADP + H(+)</text>
        <dbReference type="Rhea" id="RHEA:23832"/>
        <dbReference type="ChEBI" id="CHEBI:15378"/>
        <dbReference type="ChEBI" id="CHEBI:16062"/>
        <dbReference type="ChEBI" id="CHEBI:30616"/>
        <dbReference type="ChEBI" id="CHEBI:57666"/>
        <dbReference type="ChEBI" id="CHEBI:456216"/>
        <dbReference type="EC" id="2.7.1.60"/>
    </reaction>
</comment>
<comment type="pathway">
    <text evidence="1">Amino-sugar metabolism; N-acetylneuraminate degradation; D-fructose 6-phosphate from N-acetylneuraminate: step 2/5.</text>
</comment>
<comment type="subunit">
    <text evidence="1">Homodimer.</text>
</comment>
<comment type="similarity">
    <text evidence="1">Belongs to the ROK (NagC/XylR) family. NanK subfamily.</text>
</comment>
<gene>
    <name evidence="1" type="primary">nanK</name>
    <name type="ordered locus">EC55989_3635</name>
</gene>
<accession>B7LHT0</accession>
<name>NANK_ECO55</name>
<protein>
    <recommendedName>
        <fullName evidence="1">N-acetylmannosamine kinase</fullName>
        <ecNumber evidence="1">2.7.1.60</ecNumber>
    </recommendedName>
    <alternativeName>
        <fullName evidence="1">ManNAc kinase</fullName>
    </alternativeName>
    <alternativeName>
        <fullName evidence="1">N-acetyl-D-mannosamine kinase</fullName>
    </alternativeName>
</protein>
<dbReference type="EC" id="2.7.1.60" evidence="1"/>
<dbReference type="EMBL" id="CU928145">
    <property type="protein sequence ID" value="CAU99879.1"/>
    <property type="molecule type" value="Genomic_DNA"/>
</dbReference>
<dbReference type="RefSeq" id="WP_000209017.1">
    <property type="nucleotide sequence ID" value="NC_011748.1"/>
</dbReference>
<dbReference type="SMR" id="B7LHT0"/>
<dbReference type="KEGG" id="eck:EC55989_3635"/>
<dbReference type="HOGENOM" id="CLU_036604_0_4_6"/>
<dbReference type="UniPathway" id="UPA00629">
    <property type="reaction ID" value="UER00681"/>
</dbReference>
<dbReference type="Proteomes" id="UP000000746">
    <property type="component" value="Chromosome"/>
</dbReference>
<dbReference type="GO" id="GO:0005524">
    <property type="term" value="F:ATP binding"/>
    <property type="evidence" value="ECO:0007669"/>
    <property type="project" value="UniProtKB-UniRule"/>
</dbReference>
<dbReference type="GO" id="GO:0009384">
    <property type="term" value="F:N-acylmannosamine kinase activity"/>
    <property type="evidence" value="ECO:0007669"/>
    <property type="project" value="UniProtKB-UniRule"/>
</dbReference>
<dbReference type="GO" id="GO:0008270">
    <property type="term" value="F:zinc ion binding"/>
    <property type="evidence" value="ECO:0007669"/>
    <property type="project" value="UniProtKB-UniRule"/>
</dbReference>
<dbReference type="GO" id="GO:0019262">
    <property type="term" value="P:N-acetylneuraminate catabolic process"/>
    <property type="evidence" value="ECO:0007669"/>
    <property type="project" value="UniProtKB-UniRule"/>
</dbReference>
<dbReference type="CDD" id="cd24069">
    <property type="entry name" value="ASKHA_NBD_ROK_EcNanK-like"/>
    <property type="match status" value="1"/>
</dbReference>
<dbReference type="FunFam" id="3.30.420.40:FF:000062">
    <property type="entry name" value="N-acetylmannosamine kinase"/>
    <property type="match status" value="1"/>
</dbReference>
<dbReference type="FunFam" id="3.30.420.40:FF:000063">
    <property type="entry name" value="N-acetylmannosamine kinase"/>
    <property type="match status" value="1"/>
</dbReference>
<dbReference type="Gene3D" id="3.30.420.40">
    <property type="match status" value="2"/>
</dbReference>
<dbReference type="HAMAP" id="MF_01234">
    <property type="entry name" value="ManNAc_kinase"/>
    <property type="match status" value="1"/>
</dbReference>
<dbReference type="InterPro" id="IPR043129">
    <property type="entry name" value="ATPase_NBD"/>
</dbReference>
<dbReference type="InterPro" id="IPR023945">
    <property type="entry name" value="ManNAc_kinase_bac"/>
</dbReference>
<dbReference type="InterPro" id="IPR000600">
    <property type="entry name" value="ROK"/>
</dbReference>
<dbReference type="InterPro" id="IPR049874">
    <property type="entry name" value="ROK_cs"/>
</dbReference>
<dbReference type="NCBIfam" id="NF047821">
    <property type="entry name" value="NactlManKinNanK"/>
    <property type="match status" value="1"/>
</dbReference>
<dbReference type="NCBIfam" id="NF003461">
    <property type="entry name" value="PRK05082.1"/>
    <property type="match status" value="1"/>
</dbReference>
<dbReference type="PANTHER" id="PTHR18964:SF169">
    <property type="entry name" value="N-ACETYLMANNOSAMINE KINASE"/>
    <property type="match status" value="1"/>
</dbReference>
<dbReference type="PANTHER" id="PTHR18964">
    <property type="entry name" value="ROK (REPRESSOR, ORF, KINASE) FAMILY"/>
    <property type="match status" value="1"/>
</dbReference>
<dbReference type="Pfam" id="PF00480">
    <property type="entry name" value="ROK"/>
    <property type="match status" value="1"/>
</dbReference>
<dbReference type="SUPFAM" id="SSF53067">
    <property type="entry name" value="Actin-like ATPase domain"/>
    <property type="match status" value="1"/>
</dbReference>
<dbReference type="PROSITE" id="PS01125">
    <property type="entry name" value="ROK"/>
    <property type="match status" value="1"/>
</dbReference>
<proteinExistence type="inferred from homology"/>
<sequence>MTTLAIDIGGTKLAAALIGADGQIRDRRELPTPASQTPEALRDALSALVSPLQAHAQRVAIASTGIIRDGSLLALNPHNLGGLLHFPLVKTLEQLTNLPTIAINDAQAAAWAEYQALEGDITDMVFITVSTGVGGGVVSGGKLLTGPGGLAGHIGHTLADPHGPVCGCGRTGCVEAIASGRGIAAAAQGELAGADARTIFTRAGQGDEQAQQLIHLSARTLARLIADIKATTDCQCVVVGGSVGLAEGYLALVEMYLAQEPAAFHVDLLAAHYRHDAGLLGAALLAQGEKL</sequence>
<evidence type="ECO:0000255" key="1">
    <source>
        <dbReference type="HAMAP-Rule" id="MF_01234"/>
    </source>
</evidence>
<reference key="1">
    <citation type="journal article" date="2009" name="PLoS Genet.">
        <title>Organised genome dynamics in the Escherichia coli species results in highly diverse adaptive paths.</title>
        <authorList>
            <person name="Touchon M."/>
            <person name="Hoede C."/>
            <person name="Tenaillon O."/>
            <person name="Barbe V."/>
            <person name="Baeriswyl S."/>
            <person name="Bidet P."/>
            <person name="Bingen E."/>
            <person name="Bonacorsi S."/>
            <person name="Bouchier C."/>
            <person name="Bouvet O."/>
            <person name="Calteau A."/>
            <person name="Chiapello H."/>
            <person name="Clermont O."/>
            <person name="Cruveiller S."/>
            <person name="Danchin A."/>
            <person name="Diard M."/>
            <person name="Dossat C."/>
            <person name="Karoui M.E."/>
            <person name="Frapy E."/>
            <person name="Garry L."/>
            <person name="Ghigo J.M."/>
            <person name="Gilles A.M."/>
            <person name="Johnson J."/>
            <person name="Le Bouguenec C."/>
            <person name="Lescat M."/>
            <person name="Mangenot S."/>
            <person name="Martinez-Jehanne V."/>
            <person name="Matic I."/>
            <person name="Nassif X."/>
            <person name="Oztas S."/>
            <person name="Petit M.A."/>
            <person name="Pichon C."/>
            <person name="Rouy Z."/>
            <person name="Ruf C.S."/>
            <person name="Schneider D."/>
            <person name="Tourret J."/>
            <person name="Vacherie B."/>
            <person name="Vallenet D."/>
            <person name="Medigue C."/>
            <person name="Rocha E.P.C."/>
            <person name="Denamur E."/>
        </authorList>
    </citation>
    <scope>NUCLEOTIDE SEQUENCE [LARGE SCALE GENOMIC DNA]</scope>
    <source>
        <strain>55989 / EAEC</strain>
    </source>
</reference>